<evidence type="ECO:0000255" key="1"/>
<evidence type="ECO:0000303" key="2">
    <source>
    </source>
</evidence>
<evidence type="ECO:0000303" key="3">
    <source ref="5"/>
</evidence>
<evidence type="ECO:0000305" key="4"/>
<accession>Q9SKU6</accession>
<accession>Q3EBX7</accession>
<dbReference type="EMBL" id="AC006234">
    <property type="protein sequence ID" value="AAD20924.1"/>
    <property type="molecule type" value="Genomic_DNA"/>
</dbReference>
<dbReference type="EMBL" id="CP002685">
    <property type="protein sequence ID" value="AEC07059.1"/>
    <property type="molecule type" value="Genomic_DNA"/>
</dbReference>
<dbReference type="EMBL" id="CP002685">
    <property type="protein sequence ID" value="AEC07060.1"/>
    <property type="molecule type" value="Genomic_DNA"/>
</dbReference>
<dbReference type="EMBL" id="BX819495">
    <property type="status" value="NOT_ANNOTATED_CDS"/>
    <property type="molecule type" value="mRNA"/>
</dbReference>
<dbReference type="EMBL" id="BT015322">
    <property type="protein sequence ID" value="AAT99801.1"/>
    <property type="molecule type" value="mRNA"/>
</dbReference>
<dbReference type="EMBL" id="BT029763">
    <property type="protein sequence ID" value="ABM06033.1"/>
    <property type="molecule type" value="mRNA"/>
</dbReference>
<dbReference type="PIR" id="D84592">
    <property type="entry name" value="D84592"/>
</dbReference>
<dbReference type="RefSeq" id="NP_179663.1">
    <molecule id="Q9SKU6-1"/>
    <property type="nucleotide sequence ID" value="NM_127635.4"/>
</dbReference>
<dbReference type="RefSeq" id="NP_973492.1">
    <molecule id="Q9SKU6-2"/>
    <property type="nucleotide sequence ID" value="NM_201763.2"/>
</dbReference>
<dbReference type="SMR" id="Q9SKU6"/>
<dbReference type="FunCoup" id="Q9SKU6">
    <property type="interactions" value="92"/>
</dbReference>
<dbReference type="STRING" id="3702.Q9SKU6"/>
<dbReference type="iPTMnet" id="Q9SKU6"/>
<dbReference type="PaxDb" id="3702-AT2G20710.1"/>
<dbReference type="ProteomicsDB" id="250496">
    <molecule id="Q9SKU6-1"/>
</dbReference>
<dbReference type="EnsemblPlants" id="AT2G20710.1">
    <molecule id="Q9SKU6-1"/>
    <property type="protein sequence ID" value="AT2G20710.1"/>
    <property type="gene ID" value="AT2G20710"/>
</dbReference>
<dbReference type="EnsemblPlants" id="AT2G20710.2">
    <molecule id="Q9SKU6-2"/>
    <property type="protein sequence ID" value="AT2G20710.2"/>
    <property type="gene ID" value="AT2G20710"/>
</dbReference>
<dbReference type="GeneID" id="816599"/>
<dbReference type="Gramene" id="AT2G20710.1">
    <molecule id="Q9SKU6-1"/>
    <property type="protein sequence ID" value="AT2G20710.1"/>
    <property type="gene ID" value="AT2G20710"/>
</dbReference>
<dbReference type="Gramene" id="AT2G20710.2">
    <molecule id="Q9SKU6-2"/>
    <property type="protein sequence ID" value="AT2G20710.2"/>
    <property type="gene ID" value="AT2G20710"/>
</dbReference>
<dbReference type="KEGG" id="ath:AT2G20710"/>
<dbReference type="Araport" id="AT2G20710"/>
<dbReference type="TAIR" id="AT2G20710"/>
<dbReference type="eggNOG" id="KOG4197">
    <property type="taxonomic scope" value="Eukaryota"/>
</dbReference>
<dbReference type="HOGENOM" id="CLU_019802_3_0_1"/>
<dbReference type="InParanoid" id="Q9SKU6"/>
<dbReference type="OMA" id="NSGYLCM"/>
<dbReference type="PhylomeDB" id="Q9SKU6"/>
<dbReference type="PRO" id="PR:Q9SKU6"/>
<dbReference type="Proteomes" id="UP000006548">
    <property type="component" value="Chromosome 2"/>
</dbReference>
<dbReference type="ExpressionAtlas" id="Q9SKU6">
    <property type="expression patterns" value="baseline and differential"/>
</dbReference>
<dbReference type="GO" id="GO:0005739">
    <property type="term" value="C:mitochondrion"/>
    <property type="evidence" value="ECO:0007669"/>
    <property type="project" value="UniProtKB-SubCell"/>
</dbReference>
<dbReference type="GO" id="GO:0003729">
    <property type="term" value="F:mRNA binding"/>
    <property type="evidence" value="ECO:0007669"/>
    <property type="project" value="UniProtKB-ARBA"/>
</dbReference>
<dbReference type="FunFam" id="1.25.40.10:FF:000385">
    <property type="entry name" value="Pentatricopeptide repeat-containing protein mitochondrial"/>
    <property type="match status" value="1"/>
</dbReference>
<dbReference type="Gene3D" id="1.25.40.10">
    <property type="entry name" value="Tetratricopeptide repeat domain"/>
    <property type="match status" value="2"/>
</dbReference>
<dbReference type="InterPro" id="IPR002885">
    <property type="entry name" value="Pentatricopeptide_rpt"/>
</dbReference>
<dbReference type="InterPro" id="IPR011990">
    <property type="entry name" value="TPR-like_helical_dom_sf"/>
</dbReference>
<dbReference type="InterPro" id="IPR019734">
    <property type="entry name" value="TPR_rpt"/>
</dbReference>
<dbReference type="NCBIfam" id="TIGR00756">
    <property type="entry name" value="PPR"/>
    <property type="match status" value="2"/>
</dbReference>
<dbReference type="PANTHER" id="PTHR45717:SF10">
    <property type="entry name" value="OS10G0501000 PROTEIN"/>
    <property type="match status" value="1"/>
</dbReference>
<dbReference type="PANTHER" id="PTHR45717">
    <property type="entry name" value="OS12G0527900 PROTEIN"/>
    <property type="match status" value="1"/>
</dbReference>
<dbReference type="Pfam" id="PF01535">
    <property type="entry name" value="PPR"/>
    <property type="match status" value="4"/>
</dbReference>
<dbReference type="Pfam" id="PF13041">
    <property type="entry name" value="PPR_2"/>
    <property type="match status" value="1"/>
</dbReference>
<dbReference type="SUPFAM" id="SSF48452">
    <property type="entry name" value="TPR-like"/>
    <property type="match status" value="1"/>
</dbReference>
<dbReference type="PROSITE" id="PS51375">
    <property type="entry name" value="PPR"/>
    <property type="match status" value="9"/>
</dbReference>
<reference key="1">
    <citation type="journal article" date="1999" name="Nature">
        <title>Sequence and analysis of chromosome 2 of the plant Arabidopsis thaliana.</title>
        <authorList>
            <person name="Lin X."/>
            <person name="Kaul S."/>
            <person name="Rounsley S.D."/>
            <person name="Shea T.P."/>
            <person name="Benito M.-I."/>
            <person name="Town C.D."/>
            <person name="Fujii C.Y."/>
            <person name="Mason T.M."/>
            <person name="Bowman C.L."/>
            <person name="Barnstead M.E."/>
            <person name="Feldblyum T.V."/>
            <person name="Buell C.R."/>
            <person name="Ketchum K.A."/>
            <person name="Lee J.J."/>
            <person name="Ronning C.M."/>
            <person name="Koo H.L."/>
            <person name="Moffat K.S."/>
            <person name="Cronin L.A."/>
            <person name="Shen M."/>
            <person name="Pai G."/>
            <person name="Van Aken S."/>
            <person name="Umayam L."/>
            <person name="Tallon L.J."/>
            <person name="Gill J.E."/>
            <person name="Adams M.D."/>
            <person name="Carrera A.J."/>
            <person name="Creasy T.H."/>
            <person name="Goodman H.M."/>
            <person name="Somerville C.R."/>
            <person name="Copenhaver G.P."/>
            <person name="Preuss D."/>
            <person name="Nierman W.C."/>
            <person name="White O."/>
            <person name="Eisen J.A."/>
            <person name="Salzberg S.L."/>
            <person name="Fraser C.M."/>
            <person name="Venter J.C."/>
        </authorList>
    </citation>
    <scope>NUCLEOTIDE SEQUENCE [LARGE SCALE GENOMIC DNA]</scope>
    <source>
        <strain>cv. Columbia</strain>
    </source>
</reference>
<reference key="2">
    <citation type="journal article" date="2017" name="Plant J.">
        <title>Araport11: a complete reannotation of the Arabidopsis thaliana reference genome.</title>
        <authorList>
            <person name="Cheng C.Y."/>
            <person name="Krishnakumar V."/>
            <person name="Chan A.P."/>
            <person name="Thibaud-Nissen F."/>
            <person name="Schobel S."/>
            <person name="Town C.D."/>
        </authorList>
    </citation>
    <scope>GENOME REANNOTATION</scope>
    <source>
        <strain>cv. Columbia</strain>
    </source>
</reference>
<reference key="3">
    <citation type="journal article" date="2004" name="Genome Res.">
        <title>Whole genome sequence comparisons and 'full-length' cDNA sequences: a combined approach to evaluate and improve Arabidopsis genome annotation.</title>
        <authorList>
            <person name="Castelli V."/>
            <person name="Aury J.-M."/>
            <person name="Jaillon O."/>
            <person name="Wincker P."/>
            <person name="Clepet C."/>
            <person name="Menard M."/>
            <person name="Cruaud C."/>
            <person name="Quetier F."/>
            <person name="Scarpelli C."/>
            <person name="Schaechter V."/>
            <person name="Temple G."/>
            <person name="Caboche M."/>
            <person name="Weissenbach J."/>
            <person name="Salanoubat M."/>
        </authorList>
    </citation>
    <scope>NUCLEOTIDE SEQUENCE [LARGE SCALE MRNA] (ISOFORM 2)</scope>
    <source>
        <strain>cv. Columbia</strain>
    </source>
</reference>
<reference key="4">
    <citation type="submission" date="2004-08" db="EMBL/GenBank/DDBJ databases">
        <title>Arabidopsis cDNA clones.</title>
        <authorList>
            <person name="Shinn P."/>
            <person name="Chen H."/>
            <person name="Cheuk R.F."/>
            <person name="Kim C.J."/>
            <person name="Ecker J.R."/>
        </authorList>
    </citation>
    <scope>NUCLEOTIDE SEQUENCE [LARGE SCALE MRNA] (ISOFORM 1)</scope>
    <source>
        <strain>cv. Columbia</strain>
    </source>
</reference>
<reference key="5">
    <citation type="submission" date="2006-12" db="EMBL/GenBank/DDBJ databases">
        <title>Arabidopsis ORF clones.</title>
        <authorList>
            <person name="Bautista V.R."/>
            <person name="Kim C.J."/>
            <person name="Chen H."/>
            <person name="Wu S.Y."/>
            <person name="De Los Reyes C."/>
            <person name="Ecker J.R."/>
        </authorList>
    </citation>
    <scope>NUCLEOTIDE SEQUENCE [LARGE SCALE MRNA] (ISOFORM 2)</scope>
    <source>
        <strain>cv. Columbia</strain>
    </source>
</reference>
<reference key="6">
    <citation type="journal article" date="2004" name="Plant Cell">
        <title>Genome-wide analysis of Arabidopsis pentatricopeptide repeat proteins reveals their essential role in organelle biogenesis.</title>
        <authorList>
            <person name="Lurin C."/>
            <person name="Andres C."/>
            <person name="Aubourg S."/>
            <person name="Bellaoui M."/>
            <person name="Bitton F."/>
            <person name="Bruyere C."/>
            <person name="Caboche M."/>
            <person name="Debast C."/>
            <person name="Gualberto J."/>
            <person name="Hoffmann B."/>
            <person name="Lecharny A."/>
            <person name="Le Ret M."/>
            <person name="Martin-Magniette M.-L."/>
            <person name="Mireau H."/>
            <person name="Peeters N."/>
            <person name="Renou J.-P."/>
            <person name="Szurek B."/>
            <person name="Taconnat L."/>
            <person name="Small I."/>
        </authorList>
    </citation>
    <scope>GENE FAMILY</scope>
</reference>
<organism>
    <name type="scientific">Arabidopsis thaliana</name>
    <name type="common">Mouse-ear cress</name>
    <dbReference type="NCBI Taxonomy" id="3702"/>
    <lineage>
        <taxon>Eukaryota</taxon>
        <taxon>Viridiplantae</taxon>
        <taxon>Streptophyta</taxon>
        <taxon>Embryophyta</taxon>
        <taxon>Tracheophyta</taxon>
        <taxon>Spermatophyta</taxon>
        <taxon>Magnoliopsida</taxon>
        <taxon>eudicotyledons</taxon>
        <taxon>Gunneridae</taxon>
        <taxon>Pentapetalae</taxon>
        <taxon>rosids</taxon>
        <taxon>malvids</taxon>
        <taxon>Brassicales</taxon>
        <taxon>Brassicaceae</taxon>
        <taxon>Camelineae</taxon>
        <taxon>Arabidopsis</taxon>
    </lineage>
</organism>
<protein>
    <recommendedName>
        <fullName>Pentatricopeptide repeat-containing protein At2g20710, mitochondrial</fullName>
    </recommendedName>
</protein>
<feature type="transit peptide" description="Mitochondrion" evidence="1">
    <location>
        <begin position="1"/>
        <end position="86"/>
    </location>
</feature>
<feature type="chain" id="PRO_0000356025" description="Pentatricopeptide repeat-containing protein At2g20710, mitochondrial">
    <location>
        <begin position="87"/>
        <end position="490"/>
    </location>
</feature>
<feature type="repeat" description="PPR 1">
    <location>
        <begin position="138"/>
        <end position="172"/>
    </location>
</feature>
<feature type="repeat" description="PPR 2">
    <location>
        <begin position="173"/>
        <end position="207"/>
    </location>
</feature>
<feature type="repeat" description="PPR 3">
    <location>
        <begin position="208"/>
        <end position="243"/>
    </location>
</feature>
<feature type="repeat" description="PPR 4">
    <location>
        <begin position="244"/>
        <end position="274"/>
    </location>
</feature>
<feature type="repeat" description="PPR 5">
    <location>
        <begin position="280"/>
        <end position="310"/>
    </location>
</feature>
<feature type="repeat" description="PPR 6">
    <location>
        <begin position="314"/>
        <end position="344"/>
    </location>
</feature>
<feature type="repeat" description="PPR 7">
    <location>
        <begin position="349"/>
        <end position="379"/>
    </location>
</feature>
<feature type="repeat" description="PPR 8">
    <location>
        <begin position="384"/>
        <end position="421"/>
    </location>
</feature>
<feature type="splice variant" id="VSP_035969" description="In isoform 2." evidence="2 3">
    <location>
        <begin position="1"/>
        <end position="95"/>
    </location>
</feature>
<gene>
    <name type="ordered locus">At2g20710</name>
    <name type="ORF">F5H14.32</name>
</gene>
<name>PP166_ARATH</name>
<proteinExistence type="evidence at transcript level"/>
<sequence length="490" mass="56827">MKHLLLLRLVLPKPNYILRRSFLFHSGKTTPSPLDPYDTLQRRVARSGDPSASIIKVLDGWLDQGNLVKTSELHSIIKMLRKFSRFSHALQISDWMSEHRVHEISEGDVAIRLDLIAKVGGLGEAEKFFETIPMERRNYHLYGALLNCYASKKVLHKAEQVFQEMKELGFLKGCLPYNVMLNLYVRTGKYTMVEKLLREMEDETVKPDIFTVNTRLHAYSVVSDVEGMEKFLMRCEADQGLHLDWRTYADTANGYIKAGLTEKALEMLRKSEQMVNAQKRKHAYEVLMSFYGAAGKKEEVYRLWSLYKELDGFYNTGYISVISALLKMDDIEEVEKIMEEWEAGHSLFDIRIPHLLITGYCKKGMMEKAEEVVNILVQKWRVEDTSTWERLALGYKMAGKMEKAVEKWKRAIEVSKPGWRPHQVVLMSCVDYLEGQRDMEGLRKILRLLSERGHISYDQLLYDMNGAGLSWKIVDAMGKGRYVEEREVRI</sequence>
<keyword id="KW-0025">Alternative splicing</keyword>
<keyword id="KW-0496">Mitochondrion</keyword>
<keyword id="KW-1185">Reference proteome</keyword>
<keyword id="KW-0677">Repeat</keyword>
<keyword id="KW-0809">Transit peptide</keyword>
<comment type="subcellular location">
    <subcellularLocation>
        <location evidence="4">Mitochondrion</location>
    </subcellularLocation>
</comment>
<comment type="alternative products">
    <event type="alternative splicing"/>
    <isoform>
        <id>Q9SKU6-1</id>
        <name>1</name>
        <sequence type="displayed"/>
    </isoform>
    <isoform>
        <id>Q9SKU6-2</id>
        <name>2</name>
        <sequence type="described" ref="VSP_035969"/>
    </isoform>
</comment>
<comment type="miscellaneous">
    <molecule>Isoform 2</molecule>
    <text evidence="4">May be due to intron retention.</text>
</comment>
<comment type="similarity">
    <text evidence="4">Belongs to the PPR family. P subfamily.</text>
</comment>
<comment type="sequence caution" evidence="4">
    <conflict type="miscellaneous discrepancy">
        <sequence resource="EMBL" id="BX819495"/>
    </conflict>
    <text>Sequencing errors.</text>
</comment>
<comment type="online information" name="Pentatricopeptide repeat proteins">
    <link uri="https://ppr.plantenergy.uwa.edu.au"/>
</comment>